<gene>
    <name evidence="1" type="primary">mutS2</name>
    <name evidence="1" type="synonym">rqcU</name>
    <name type="ordered locus">SERP0727</name>
</gene>
<evidence type="ECO:0000255" key="1">
    <source>
        <dbReference type="HAMAP-Rule" id="MF_00092"/>
    </source>
</evidence>
<keyword id="KW-0067">ATP-binding</keyword>
<keyword id="KW-0238">DNA-binding</keyword>
<keyword id="KW-0255">Endonuclease</keyword>
<keyword id="KW-0378">Hydrolase</keyword>
<keyword id="KW-0540">Nuclease</keyword>
<keyword id="KW-0547">Nucleotide-binding</keyword>
<keyword id="KW-1185">Reference proteome</keyword>
<keyword id="KW-0694">RNA-binding</keyword>
<keyword id="KW-0699">rRNA-binding</keyword>
<name>MUTS2_STAEQ</name>
<dbReference type="EC" id="3.1.-.-" evidence="1"/>
<dbReference type="EC" id="3.6.4.-" evidence="1"/>
<dbReference type="EMBL" id="CP000029">
    <property type="protein sequence ID" value="AAW54100.1"/>
    <property type="molecule type" value="Genomic_DNA"/>
</dbReference>
<dbReference type="RefSeq" id="WP_002446210.1">
    <property type="nucleotide sequence ID" value="NC_002976.3"/>
</dbReference>
<dbReference type="SMR" id="Q5HQ30"/>
<dbReference type="STRING" id="176279.SERP0727"/>
<dbReference type="KEGG" id="ser:SERP0727"/>
<dbReference type="eggNOG" id="COG1193">
    <property type="taxonomic scope" value="Bacteria"/>
</dbReference>
<dbReference type="HOGENOM" id="CLU_011252_2_1_9"/>
<dbReference type="Proteomes" id="UP000000531">
    <property type="component" value="Chromosome"/>
</dbReference>
<dbReference type="GO" id="GO:0005524">
    <property type="term" value="F:ATP binding"/>
    <property type="evidence" value="ECO:0007669"/>
    <property type="project" value="UniProtKB-UniRule"/>
</dbReference>
<dbReference type="GO" id="GO:0016887">
    <property type="term" value="F:ATP hydrolysis activity"/>
    <property type="evidence" value="ECO:0007669"/>
    <property type="project" value="InterPro"/>
</dbReference>
<dbReference type="GO" id="GO:0140664">
    <property type="term" value="F:ATP-dependent DNA damage sensor activity"/>
    <property type="evidence" value="ECO:0007669"/>
    <property type="project" value="InterPro"/>
</dbReference>
<dbReference type="GO" id="GO:0004519">
    <property type="term" value="F:endonuclease activity"/>
    <property type="evidence" value="ECO:0007669"/>
    <property type="project" value="UniProtKB-UniRule"/>
</dbReference>
<dbReference type="GO" id="GO:0030983">
    <property type="term" value="F:mismatched DNA binding"/>
    <property type="evidence" value="ECO:0007669"/>
    <property type="project" value="InterPro"/>
</dbReference>
<dbReference type="GO" id="GO:0043023">
    <property type="term" value="F:ribosomal large subunit binding"/>
    <property type="evidence" value="ECO:0007669"/>
    <property type="project" value="UniProtKB-UniRule"/>
</dbReference>
<dbReference type="GO" id="GO:0019843">
    <property type="term" value="F:rRNA binding"/>
    <property type="evidence" value="ECO:0007669"/>
    <property type="project" value="UniProtKB-UniRule"/>
</dbReference>
<dbReference type="GO" id="GO:0006298">
    <property type="term" value="P:mismatch repair"/>
    <property type="evidence" value="ECO:0007669"/>
    <property type="project" value="InterPro"/>
</dbReference>
<dbReference type="GO" id="GO:0045910">
    <property type="term" value="P:negative regulation of DNA recombination"/>
    <property type="evidence" value="ECO:0007669"/>
    <property type="project" value="InterPro"/>
</dbReference>
<dbReference type="GO" id="GO:0072344">
    <property type="term" value="P:rescue of stalled ribosome"/>
    <property type="evidence" value="ECO:0007669"/>
    <property type="project" value="UniProtKB-UniRule"/>
</dbReference>
<dbReference type="CDD" id="cd03280">
    <property type="entry name" value="ABC_MutS2"/>
    <property type="match status" value="1"/>
</dbReference>
<dbReference type="FunFam" id="3.30.1370.110:FF:000004">
    <property type="entry name" value="Endonuclease MutS2"/>
    <property type="match status" value="1"/>
</dbReference>
<dbReference type="FunFam" id="3.40.50.300:FF:000830">
    <property type="entry name" value="Endonuclease MutS2"/>
    <property type="match status" value="1"/>
</dbReference>
<dbReference type="Gene3D" id="3.30.1370.110">
    <property type="match status" value="1"/>
</dbReference>
<dbReference type="Gene3D" id="3.40.50.300">
    <property type="entry name" value="P-loop containing nucleotide triphosphate hydrolases"/>
    <property type="match status" value="1"/>
</dbReference>
<dbReference type="HAMAP" id="MF_00092">
    <property type="entry name" value="MutS2"/>
    <property type="match status" value="1"/>
</dbReference>
<dbReference type="InterPro" id="IPR000432">
    <property type="entry name" value="DNA_mismatch_repair_MutS_C"/>
</dbReference>
<dbReference type="InterPro" id="IPR007696">
    <property type="entry name" value="DNA_mismatch_repair_MutS_core"/>
</dbReference>
<dbReference type="InterPro" id="IPR036187">
    <property type="entry name" value="DNA_mismatch_repair_MutS_sf"/>
</dbReference>
<dbReference type="InterPro" id="IPR046893">
    <property type="entry name" value="MSSS"/>
</dbReference>
<dbReference type="InterPro" id="IPR045076">
    <property type="entry name" value="MutS"/>
</dbReference>
<dbReference type="InterPro" id="IPR005747">
    <property type="entry name" value="MutS2"/>
</dbReference>
<dbReference type="InterPro" id="IPR027417">
    <property type="entry name" value="P-loop_NTPase"/>
</dbReference>
<dbReference type="InterPro" id="IPR002625">
    <property type="entry name" value="Smr_dom"/>
</dbReference>
<dbReference type="InterPro" id="IPR036063">
    <property type="entry name" value="Smr_dom_sf"/>
</dbReference>
<dbReference type="NCBIfam" id="TIGR01069">
    <property type="entry name" value="mutS2"/>
    <property type="match status" value="1"/>
</dbReference>
<dbReference type="PANTHER" id="PTHR48466:SF2">
    <property type="entry name" value="OS10G0509000 PROTEIN"/>
    <property type="match status" value="1"/>
</dbReference>
<dbReference type="PANTHER" id="PTHR48466">
    <property type="entry name" value="OS10G0509000 PROTEIN-RELATED"/>
    <property type="match status" value="1"/>
</dbReference>
<dbReference type="Pfam" id="PF20297">
    <property type="entry name" value="MSSS"/>
    <property type="match status" value="1"/>
</dbReference>
<dbReference type="Pfam" id="PF00488">
    <property type="entry name" value="MutS_V"/>
    <property type="match status" value="1"/>
</dbReference>
<dbReference type="Pfam" id="PF01713">
    <property type="entry name" value="Smr"/>
    <property type="match status" value="1"/>
</dbReference>
<dbReference type="PIRSF" id="PIRSF005814">
    <property type="entry name" value="MutS_YshD"/>
    <property type="match status" value="1"/>
</dbReference>
<dbReference type="SMART" id="SM00534">
    <property type="entry name" value="MUTSac"/>
    <property type="match status" value="1"/>
</dbReference>
<dbReference type="SMART" id="SM00533">
    <property type="entry name" value="MUTSd"/>
    <property type="match status" value="1"/>
</dbReference>
<dbReference type="SMART" id="SM00463">
    <property type="entry name" value="SMR"/>
    <property type="match status" value="1"/>
</dbReference>
<dbReference type="SUPFAM" id="SSF48334">
    <property type="entry name" value="DNA repair protein MutS, domain III"/>
    <property type="match status" value="1"/>
</dbReference>
<dbReference type="SUPFAM" id="SSF52540">
    <property type="entry name" value="P-loop containing nucleoside triphosphate hydrolases"/>
    <property type="match status" value="1"/>
</dbReference>
<dbReference type="SUPFAM" id="SSF160443">
    <property type="entry name" value="SMR domain-like"/>
    <property type="match status" value="1"/>
</dbReference>
<dbReference type="PROSITE" id="PS00486">
    <property type="entry name" value="DNA_MISMATCH_REPAIR_2"/>
    <property type="match status" value="1"/>
</dbReference>
<dbReference type="PROSITE" id="PS50828">
    <property type="entry name" value="SMR"/>
    <property type="match status" value="1"/>
</dbReference>
<organism>
    <name type="scientific">Staphylococcus epidermidis (strain ATCC 35984 / DSM 28319 / BCRC 17069 / CCUG 31568 / BM 3577 / RP62A)</name>
    <dbReference type="NCBI Taxonomy" id="176279"/>
    <lineage>
        <taxon>Bacteria</taxon>
        <taxon>Bacillati</taxon>
        <taxon>Bacillota</taxon>
        <taxon>Bacilli</taxon>
        <taxon>Bacillales</taxon>
        <taxon>Staphylococcaceae</taxon>
        <taxon>Staphylococcus</taxon>
    </lineage>
</organism>
<sequence length="782" mass="88719">MRQKTLDVLEFEKIKSFVADETISDLGREKVQEMAPASNFDTVEFQMNETDEISQIYNKHRLPSLSGLAKVSPLVHRASIGGVLNVAELNRIKRLVQVQNQFKTFYNQMLEEDEEVKYPILHDKMNHLPILTDLFKEINETCDAHDLFDHASYTLQSIRSKISRTNQRIRQNLDRIVKNQGNQKKLSDAIVTVRNDRNVIPVKAEYRQDFNGIVHDQSASGQTLYIEPNSVVEMNNQISRLRNDEAVERERILTELTGFVSAEADALLIAESVMGQIDFLIAKARYARTIKGTKPTFKEDRTIYLPNAFHPLLDKDTVVANTIEFIDDVETVIITGPNTGGKTVTLKTLGLIIVMAQSGLLIPTLDGSQLSIFENVYCDIGDEQSIEQSLSTFSSHMKNIVEILQDADQNSLILFDELGAGTDPSEGAALAMSILDYVRRLGSLVMATTHYPELKAYSYNREGVMNASVEFDVETLSPTYKLLMGVPGRSNAFDISKKLGLSLNIINKAKTMIGTDEQEINAMIESLEQNSKRVDQQRIELDRLVREAQQTHDALSKQYQQYQNYETSLMDEAKEKANQRVKSATKEADEILKELRNLRDHKGAEVKEHELIDKKKQLDDQYEVKSIKQHVQKKKYDTIHTGDEVKVLSYGQKGEVLELVGDEEAVVQMGIIKMKLPIEDLEKTKKKKEKPTKMVTRQNRQTIKTELDLRGYRYEEALNELDQYLDQAVLSNYEQVYIIHGKGTGALQKGVQQHLKKHKSVRQFRGGMPSEGGFGVTVAELK</sequence>
<reference key="1">
    <citation type="journal article" date="2005" name="J. Bacteriol.">
        <title>Insights on evolution of virulence and resistance from the complete genome analysis of an early methicillin-resistant Staphylococcus aureus strain and a biofilm-producing methicillin-resistant Staphylococcus epidermidis strain.</title>
        <authorList>
            <person name="Gill S.R."/>
            <person name="Fouts D.E."/>
            <person name="Archer G.L."/>
            <person name="Mongodin E.F."/>
            <person name="DeBoy R.T."/>
            <person name="Ravel J."/>
            <person name="Paulsen I.T."/>
            <person name="Kolonay J.F."/>
            <person name="Brinkac L.M."/>
            <person name="Beanan M.J."/>
            <person name="Dodson R.J."/>
            <person name="Daugherty S.C."/>
            <person name="Madupu R."/>
            <person name="Angiuoli S.V."/>
            <person name="Durkin A.S."/>
            <person name="Haft D.H."/>
            <person name="Vamathevan J.J."/>
            <person name="Khouri H."/>
            <person name="Utterback T.R."/>
            <person name="Lee C."/>
            <person name="Dimitrov G."/>
            <person name="Jiang L."/>
            <person name="Qin H."/>
            <person name="Weidman J."/>
            <person name="Tran K."/>
            <person name="Kang K.H."/>
            <person name="Hance I.R."/>
            <person name="Nelson K.E."/>
            <person name="Fraser C.M."/>
        </authorList>
    </citation>
    <scope>NUCLEOTIDE SEQUENCE [LARGE SCALE GENOMIC DNA]</scope>
    <source>
        <strain>ATCC 35984 / DSM 28319 / BCRC 17069 / CCUG 31568 / BM 3577 / RP62A</strain>
    </source>
</reference>
<feature type="chain" id="PRO_0000115235" description="Endonuclease MutS2">
    <location>
        <begin position="1"/>
        <end position="782"/>
    </location>
</feature>
<feature type="domain" description="Smr" evidence="1">
    <location>
        <begin position="707"/>
        <end position="782"/>
    </location>
</feature>
<feature type="binding site" evidence="1">
    <location>
        <begin position="336"/>
        <end position="343"/>
    </location>
    <ligand>
        <name>ATP</name>
        <dbReference type="ChEBI" id="CHEBI:30616"/>
    </ligand>
</feature>
<protein>
    <recommendedName>
        <fullName evidence="1">Endonuclease MutS2</fullName>
        <ecNumber evidence="1">3.1.-.-</ecNumber>
    </recommendedName>
    <alternativeName>
        <fullName evidence="1">Ribosome-associated protein quality control-upstream factor</fullName>
        <shortName evidence="1">RQC-upstream factor</shortName>
        <shortName evidence="1">RqcU</shortName>
        <ecNumber evidence="1">3.6.4.-</ecNumber>
    </alternativeName>
</protein>
<proteinExistence type="inferred from homology"/>
<accession>Q5HQ30</accession>
<comment type="function">
    <text evidence="1">Endonuclease that is involved in the suppression of homologous recombination and thus may have a key role in the control of bacterial genetic diversity.</text>
</comment>
<comment type="function">
    <text evidence="1">Acts as a ribosome collision sensor, splitting the ribosome into its 2 subunits. Detects stalled/collided 70S ribosomes which it binds and splits by an ATP-hydrolysis driven conformational change. Acts upstream of the ribosome quality control system (RQC), a ribosome-associated complex that mediates the extraction of incompletely synthesized nascent chains from stalled ribosomes and their subsequent degradation. Probably generates substrates for RQC.</text>
</comment>
<comment type="subunit">
    <text evidence="1">Homodimer. Binds to stalled ribosomes, contacting rRNA.</text>
</comment>
<comment type="similarity">
    <text evidence="1">Belongs to the DNA mismatch repair MutS family. MutS2 subfamily.</text>
</comment>